<feature type="chain" id="PRO_0000317455" description="Coiled-coil domain-containing protein 88B">
    <location>
        <begin position="1"/>
        <end position="1481"/>
    </location>
</feature>
<feature type="region of interest" description="Disordered" evidence="3">
    <location>
        <begin position="430"/>
        <end position="458"/>
    </location>
</feature>
<feature type="region of interest" description="Disordered" evidence="3">
    <location>
        <begin position="494"/>
        <end position="731"/>
    </location>
</feature>
<feature type="region of interest" description="Disordered" evidence="3">
    <location>
        <begin position="1331"/>
        <end position="1481"/>
    </location>
</feature>
<feature type="coiled-coil region" evidence="2">
    <location>
        <begin position="200"/>
        <end position="225"/>
    </location>
</feature>
<feature type="coiled-coil region" evidence="2">
    <location>
        <begin position="258"/>
        <end position="491"/>
    </location>
</feature>
<feature type="coiled-coil region" evidence="2">
    <location>
        <begin position="731"/>
        <end position="1308"/>
    </location>
</feature>
<feature type="compositionally biased region" description="Polar residues" evidence="3">
    <location>
        <begin position="542"/>
        <end position="557"/>
    </location>
</feature>
<feature type="compositionally biased region" description="Polar residues" evidence="3">
    <location>
        <begin position="568"/>
        <end position="590"/>
    </location>
</feature>
<feature type="compositionally biased region" description="Basic and acidic residues" evidence="3">
    <location>
        <begin position="660"/>
        <end position="695"/>
    </location>
</feature>
<feature type="compositionally biased region" description="Polar residues" evidence="3">
    <location>
        <begin position="1371"/>
        <end position="1386"/>
    </location>
</feature>
<feature type="compositionally biased region" description="Basic and acidic residues" evidence="3">
    <location>
        <begin position="1453"/>
        <end position="1472"/>
    </location>
</feature>
<feature type="modified residue" description="Phosphoserine" evidence="9">
    <location>
        <position position="441"/>
    </location>
</feature>
<feature type="modified residue" description="Phosphoserine" evidence="10">
    <location>
        <position position="649"/>
    </location>
</feature>
<feature type="modified residue" description="Phosphoserine" evidence="10">
    <location>
        <position position="1353"/>
    </location>
</feature>
<feature type="modified residue" description="Phosphoserine" evidence="10">
    <location>
        <position position="1384"/>
    </location>
</feature>
<feature type="splice variant" id="VSP_030966" description="In isoform 2." evidence="6">
    <original>QAAEVFKGQLE</original>
    <variation>DSWVKRVKIQQ</variation>
    <location>
        <begin position="349"/>
        <end position="359"/>
    </location>
</feature>
<dbReference type="EMBL" id="AC120557">
    <property type="status" value="NOT_ANNOTATED_CDS"/>
    <property type="molecule type" value="Genomic_DNA"/>
</dbReference>
<dbReference type="EMBL" id="BC076600">
    <property type="protein sequence ID" value="AAH76600.1"/>
    <property type="molecule type" value="mRNA"/>
</dbReference>
<dbReference type="EMBL" id="BC151001">
    <property type="protein sequence ID" value="AAI51002.1"/>
    <property type="molecule type" value="mRNA"/>
</dbReference>
<dbReference type="EMBL" id="BC151009">
    <property type="protein sequence ID" value="AAI51010.1"/>
    <property type="molecule type" value="mRNA"/>
</dbReference>
<dbReference type="CCDS" id="CCDS37900.1">
    <molecule id="Q4QRL3-1"/>
</dbReference>
<dbReference type="RefSeq" id="NP_001074760.1">
    <molecule id="Q4QRL3-1"/>
    <property type="nucleotide sequence ID" value="NM_001081291.1"/>
</dbReference>
<dbReference type="SMR" id="Q4QRL3"/>
<dbReference type="FunCoup" id="Q4QRL3">
    <property type="interactions" value="323"/>
</dbReference>
<dbReference type="IntAct" id="Q4QRL3">
    <property type="interactions" value="4"/>
</dbReference>
<dbReference type="MINT" id="Q4QRL3"/>
<dbReference type="STRING" id="10090.ENSMUSP00000109067"/>
<dbReference type="GlyGen" id="Q4QRL3">
    <property type="glycosylation" value="3 sites, 1 O-linked glycan (1 site)"/>
</dbReference>
<dbReference type="iPTMnet" id="Q4QRL3"/>
<dbReference type="PhosphoSitePlus" id="Q4QRL3"/>
<dbReference type="CPTAC" id="non-CPTAC-3967"/>
<dbReference type="jPOST" id="Q4QRL3"/>
<dbReference type="PaxDb" id="10090-ENSMUSP00000109067"/>
<dbReference type="ProteomicsDB" id="283722">
    <molecule id="Q4QRL3-1"/>
</dbReference>
<dbReference type="ProteomicsDB" id="283723">
    <molecule id="Q4QRL3-2"/>
</dbReference>
<dbReference type="Antibodypedia" id="15381">
    <property type="antibodies" value="49 antibodies from 10 providers"/>
</dbReference>
<dbReference type="Ensembl" id="ENSMUST00000113440.2">
    <molecule id="Q4QRL3-1"/>
    <property type="protein sequence ID" value="ENSMUSP00000109067.2"/>
    <property type="gene ID" value="ENSMUSG00000047810.10"/>
</dbReference>
<dbReference type="GeneID" id="78317"/>
<dbReference type="KEGG" id="mmu:78317"/>
<dbReference type="UCSC" id="uc008gjb.1">
    <molecule id="Q4QRL3-1"/>
    <property type="organism name" value="mouse"/>
</dbReference>
<dbReference type="AGR" id="MGI:1925567"/>
<dbReference type="CTD" id="283234"/>
<dbReference type="MGI" id="MGI:1925567">
    <property type="gene designation" value="Ccdc88b"/>
</dbReference>
<dbReference type="VEuPathDB" id="HostDB:ENSMUSG00000047810"/>
<dbReference type="eggNOG" id="KOG4643">
    <property type="taxonomic scope" value="Eukaryota"/>
</dbReference>
<dbReference type="GeneTree" id="ENSGT00940000162048"/>
<dbReference type="HOGENOM" id="CLU_002567_1_0_1"/>
<dbReference type="InParanoid" id="Q4QRL3"/>
<dbReference type="OMA" id="IMRSDMM"/>
<dbReference type="OrthoDB" id="10254988at2759"/>
<dbReference type="PhylomeDB" id="Q4QRL3"/>
<dbReference type="TreeFam" id="TF320231"/>
<dbReference type="BioGRID-ORCS" id="78317">
    <property type="hits" value="5 hits in 77 CRISPR screens"/>
</dbReference>
<dbReference type="PRO" id="PR:Q4QRL3"/>
<dbReference type="Proteomes" id="UP000000589">
    <property type="component" value="Chromosome 19"/>
</dbReference>
<dbReference type="RNAct" id="Q4QRL3">
    <property type="molecule type" value="protein"/>
</dbReference>
<dbReference type="Bgee" id="ENSMUSG00000047810">
    <property type="expression patterns" value="Expressed in granulocyte and 66 other cell types or tissues"/>
</dbReference>
<dbReference type="ExpressionAtlas" id="Q4QRL3">
    <property type="expression patterns" value="baseline and differential"/>
</dbReference>
<dbReference type="GO" id="GO:0005813">
    <property type="term" value="C:centrosome"/>
    <property type="evidence" value="ECO:0007669"/>
    <property type="project" value="Ensembl"/>
</dbReference>
<dbReference type="GO" id="GO:0005829">
    <property type="term" value="C:cytosol"/>
    <property type="evidence" value="ECO:0007669"/>
    <property type="project" value="Ensembl"/>
</dbReference>
<dbReference type="GO" id="GO:0005783">
    <property type="term" value="C:endoplasmic reticulum"/>
    <property type="evidence" value="ECO:0007669"/>
    <property type="project" value="UniProtKB-SubCell"/>
</dbReference>
<dbReference type="GO" id="GO:0005794">
    <property type="term" value="C:Golgi apparatus"/>
    <property type="evidence" value="ECO:0007669"/>
    <property type="project" value="UniProtKB-SubCell"/>
</dbReference>
<dbReference type="GO" id="GO:0016020">
    <property type="term" value="C:membrane"/>
    <property type="evidence" value="ECO:0000314"/>
    <property type="project" value="UniProtKB"/>
</dbReference>
<dbReference type="GO" id="GO:0005654">
    <property type="term" value="C:nucleoplasm"/>
    <property type="evidence" value="ECO:0007669"/>
    <property type="project" value="Ensembl"/>
</dbReference>
<dbReference type="GO" id="GO:0030705">
    <property type="term" value="P:cytoskeleton-dependent intracellular transport"/>
    <property type="evidence" value="ECO:0007669"/>
    <property type="project" value="InterPro"/>
</dbReference>
<dbReference type="GO" id="GO:0042832">
    <property type="term" value="P:defense response to protozoan"/>
    <property type="evidence" value="ECO:0000315"/>
    <property type="project" value="UniProtKB"/>
</dbReference>
<dbReference type="GO" id="GO:0001819">
    <property type="term" value="P:positive regulation of cytokine production"/>
    <property type="evidence" value="ECO:0000315"/>
    <property type="project" value="UniProtKB"/>
</dbReference>
<dbReference type="GO" id="GO:0050870">
    <property type="term" value="P:positive regulation of T cell activation"/>
    <property type="evidence" value="ECO:0000315"/>
    <property type="project" value="UniProtKB"/>
</dbReference>
<dbReference type="GO" id="GO:0042102">
    <property type="term" value="P:positive regulation of T cell proliferation"/>
    <property type="evidence" value="ECO:0000315"/>
    <property type="project" value="UniProtKB"/>
</dbReference>
<dbReference type="CDD" id="cd22230">
    <property type="entry name" value="HkD_Gipie"/>
    <property type="match status" value="1"/>
</dbReference>
<dbReference type="FunFam" id="1.10.418.10:FF:000076">
    <property type="entry name" value="Coiled-coil domain containing 88B"/>
    <property type="match status" value="1"/>
</dbReference>
<dbReference type="Gene3D" id="1.10.418.10">
    <property type="entry name" value="Calponin-like domain"/>
    <property type="match status" value="1"/>
</dbReference>
<dbReference type="InterPro" id="IPR036872">
    <property type="entry name" value="CH_dom_sf"/>
</dbReference>
<dbReference type="InterPro" id="IPR043936">
    <property type="entry name" value="HOOK_N"/>
</dbReference>
<dbReference type="PANTHER" id="PTHR18947:SF35">
    <property type="entry name" value="COILED-COIL DOMAIN-CONTAINING PROTEIN 88B"/>
    <property type="match status" value="1"/>
</dbReference>
<dbReference type="PANTHER" id="PTHR18947">
    <property type="entry name" value="HOOK PROTEINS"/>
    <property type="match status" value="1"/>
</dbReference>
<dbReference type="Pfam" id="PF19047">
    <property type="entry name" value="HOOK_N"/>
    <property type="match status" value="1"/>
</dbReference>
<dbReference type="SUPFAM" id="SSF116907">
    <property type="entry name" value="Hook domain"/>
    <property type="match status" value="1"/>
</dbReference>
<proteinExistence type="evidence at protein level"/>
<name>CC88B_MOUSE</name>
<organism>
    <name type="scientific">Mus musculus</name>
    <name type="common">Mouse</name>
    <dbReference type="NCBI Taxonomy" id="10090"/>
    <lineage>
        <taxon>Eukaryota</taxon>
        <taxon>Metazoa</taxon>
        <taxon>Chordata</taxon>
        <taxon>Craniata</taxon>
        <taxon>Vertebrata</taxon>
        <taxon>Euteleostomi</taxon>
        <taxon>Mammalia</taxon>
        <taxon>Eutheria</taxon>
        <taxon>Euarchontoglires</taxon>
        <taxon>Glires</taxon>
        <taxon>Rodentia</taxon>
        <taxon>Myomorpha</taxon>
        <taxon>Muroidea</taxon>
        <taxon>Muridae</taxon>
        <taxon>Murinae</taxon>
        <taxon>Mus</taxon>
        <taxon>Mus</taxon>
    </lineage>
</organism>
<keyword id="KW-0025">Alternative splicing</keyword>
<keyword id="KW-0175">Coiled coil</keyword>
<keyword id="KW-0963">Cytoplasm</keyword>
<keyword id="KW-0206">Cytoskeleton</keyword>
<keyword id="KW-0256">Endoplasmic reticulum</keyword>
<keyword id="KW-0333">Golgi apparatus</keyword>
<keyword id="KW-0472">Membrane</keyword>
<keyword id="KW-0597">Phosphoprotein</keyword>
<keyword id="KW-1185">Reference proteome</keyword>
<keyword id="KW-0346">Stress response</keyword>
<evidence type="ECO:0000250" key="1">
    <source>
        <dbReference type="UniProtKB" id="A6NC98"/>
    </source>
</evidence>
<evidence type="ECO:0000255" key="2"/>
<evidence type="ECO:0000256" key="3">
    <source>
        <dbReference type="SAM" id="MobiDB-lite"/>
    </source>
</evidence>
<evidence type="ECO:0000269" key="4">
    <source>
    </source>
</evidence>
<evidence type="ECO:0000269" key="5">
    <source>
    </source>
</evidence>
<evidence type="ECO:0000303" key="6">
    <source>
    </source>
</evidence>
<evidence type="ECO:0000303" key="7">
    <source>
    </source>
</evidence>
<evidence type="ECO:0000305" key="8"/>
<evidence type="ECO:0007744" key="9">
    <source>
    </source>
</evidence>
<evidence type="ECO:0007744" key="10">
    <source>
    </source>
</evidence>
<accession>Q4QRL3</accession>
<accession>B2RX63</accession>
<sequence length="1481" mass="166608">MEGAKGPRLRGFLSGSLATWALGLAGLVGEAEESAGGTEEEEEEEEEEGALCTEKRFLRLIDGALLLRVLGIIAPSSRGGLRMVRGRDGPAACRMWNLCHLWGRLRDFYQEELQLLILSPPPDLQTMGCDPFSEEAVDELESILRLLLGASVQCEHRELFIRHIRGLSLDVQSELAGAIQEVTQPGAGVVLALAGPESGELVAEELEMQLRSLTGMMSRLARERDLGAQRLAELLLEREPAHLLLPEAPANASAEGVSHHLALQLTNAKAQLRRLRQEVEEKAEQLLDSQAEVQGLEAEIRRLRQETQALSAQAKRAELYREEAEALRERAGRLPRLQEELRRCREKLQAAEVFKGQLEEERVLSEALEASKVLLEEQLEVARERSARLHETQRENLLLRTRLGEAHADLDSLRHQLEQLVEENVELELELQRSLEPPPGSPGEASLPGAAPSLQDEVREAEAGRLRAVERENRELRGQLQMLQAQLGSQHPLLEEQRENSRQPPVPNRDPATPSALHHSPQSPACQIGGEGSESLDLPSPASYSDITRSPKCSQAPDSHPELESPLQMVSQDPQTSDQALQESDPTVETHQCLEKSGHRVPLQSPIVWDPPQGPEVRIEVQELLGETGSREAPQGELVHKAQVLKQESPKCRPRSAELTLREPLKDQKALDRELELSKQQKETGRHEQRPKGLESKLGPQKPQQTSEGVPDAWSREEPTPGETLVSAIPEEQALRDEVAQLRREVAGLEVKLQAQAQRLEARSAEALCLSEELAQARRTEAEAHQEAEAQAREQARLREAVDTASLELEAASREREALAEALAAAGRERRQWERDGPRLRAQVEAAEQQVQALESQVRCHLEEAEREHAEKQALREELEKAVLRGQELGDRLEHLQEELEQAALERQKFLQEQENQHQRYRHLEQRLEAELQAASTSKEEALMELKARALQLEEELIQLRQYPVDLATGARAGPRTVETQNGRLIEVERNNATLVAEKAALQGQLQHLEGQLGSLQGRAQELLLQSQRAQEHSSRLQAEKSMMEMQGQELHRKLGVLEEEVRAARRAQEETRGQQQALLRDHEALVQLQRRQETELEGLLVRHRDLKANMRALELAHRELQGRHEQLQAQRANVEAQEVALLAERERLMQDGHRQRGLEEELRRLQNEHERAQMLLAEVSRERGELQGERGELRSRLARLELERAQLEIQSQQLRESNQQLDLSACRLTTQCELLTQLRSAQEEENRQLLAEVQALSRENRELLERSLESRDHLHREQREYLDQLNALRREKQKLVEKIMDQYRVLEPGPLPRTKKGSWLADKVKRLIRPRREGALHGGPRLGADGAGSTESLGGPLETELPEGREADGTGSSSPAPMRRVQSSLCLGDETLAGGQRRRLSSRFPGGRSSASFSPGDTPRQRFRQRRPGPLGAPSTHSKGSGVEWDGSIKTLSEHEADDTREAFQEQKPEKQFLTPSLSQ</sequence>
<gene>
    <name type="primary">Ccdc88b</name>
    <name type="synonym">Ccdc88</name>
</gene>
<comment type="function">
    <text evidence="1 4 5">Acts as a positive regulator of T-cell maturation and inflammatory function. Required for several functions of T-cells in both the CD4(+) and the CD8(+) compartments and this includes expression of cell surface markers of activation, proliferation, and cytokine production in response to specific or non-specific stimulation and during the course of infection with the mouse malaria parasite Plasmodium berghei (PubMed:25403443). Enhances NK cell cytotoxicity by positively regulating polarization of microtubule-organizing center (MTOC) to cytotoxic synapse, lytic granule transport along microtubules, and dynein-mediated clustering to MTOC (By similarity). Interacts with HSPA5 and stabilizes the interaction between HSPA5 and ERN1, leading to suppression of ERN1-induced JNK activation and endoplasmic reticulum stress-induced apoptosis (PubMed:21289099).</text>
</comment>
<comment type="subunit">
    <text evidence="1 4">Homodimer (By similarity). Interacts with DOCK8 (By similarity). Interacts (via C-terminus) with intact microtubules (By similarity). Interacts with dynein-dynactin motor complex (By similarity). Interacts (via C-terminus) with HSPA5 (PubMed:21289099).</text>
</comment>
<comment type="interaction">
    <interactant intactId="EBI-54453184">
        <id>Q4QRL3</id>
    </interactant>
    <interactant intactId="EBI-772191">
        <id>Q60875</id>
        <label>Arhgef2</label>
    </interactant>
    <organismsDiffer>false</organismsDiffer>
    <experiments>6</experiments>
</comment>
<comment type="interaction">
    <interactant intactId="EBI-54453184">
        <id>Q4QRL3</id>
    </interactant>
    <interactant intactId="EBI-12601423">
        <id>Q8C2K5</id>
        <label>Rasal3</label>
    </interactant>
    <organismsDiffer>false</organismsDiffer>
    <experiments>6</experiments>
</comment>
<comment type="subcellular location">
    <subcellularLocation>
        <location evidence="5">Membrane</location>
        <topology evidence="8">Peripheral membrane protein</topology>
    </subcellularLocation>
    <subcellularLocation>
        <location evidence="1">Cytoplasm</location>
        <location evidence="1">Cytoskeleton</location>
        <location evidence="1">Microtubule organizing center</location>
    </subcellularLocation>
    <subcellularLocation>
        <location evidence="1">Endoplasmic reticulum</location>
    </subcellularLocation>
    <subcellularLocation>
        <location evidence="1">Golgi apparatus</location>
    </subcellularLocation>
    <subcellularLocation>
        <location evidence="1">Cytoplasm</location>
    </subcellularLocation>
</comment>
<comment type="alternative products">
    <event type="alternative splicing"/>
    <isoform>
        <id>Q4QRL3-1</id>
        <name>1</name>
        <sequence type="displayed"/>
    </isoform>
    <isoform>
        <id>Q4QRL3-2</id>
        <name>2</name>
        <sequence type="described" ref="VSP_030966"/>
    </isoform>
</comment>
<comment type="tissue specificity">
    <text evidence="4 5">Abundantly expressed in immune cells, including both CD4(+) and CD8(+) T-cells and in myeloid cells (at protein level) (PubMed:25403443). Expressed in endothelium (at protein level) (PubMed:21289099). Expressed specifically in spleen, bone marrow, lymph nodes and thymus (PubMed:25403443). Expressed in liver and heart (PubMed:21289099).</text>
</comment>
<comment type="disruption phenotype">
    <text evidence="5">Mice show defects in T-cell functions including impaired maturation, significantly reduced activation, reduced cell division as well as impaired cytokine production in response to specific or non-specific stimulation and during the course of infection with the mouse malaria parasite Plasmodium berghei.</text>
</comment>
<comment type="similarity">
    <text evidence="8">Belongs to the CCDC88 family.</text>
</comment>
<reference key="1">
    <citation type="journal article" date="2009" name="PLoS Biol.">
        <title>Lineage-specific biology revealed by a finished genome assembly of the mouse.</title>
        <authorList>
            <person name="Church D.M."/>
            <person name="Goodstadt L."/>
            <person name="Hillier L.W."/>
            <person name="Zody M.C."/>
            <person name="Goldstein S."/>
            <person name="She X."/>
            <person name="Bult C.J."/>
            <person name="Agarwala R."/>
            <person name="Cherry J.L."/>
            <person name="DiCuccio M."/>
            <person name="Hlavina W."/>
            <person name="Kapustin Y."/>
            <person name="Meric P."/>
            <person name="Maglott D."/>
            <person name="Birtle Z."/>
            <person name="Marques A.C."/>
            <person name="Graves T."/>
            <person name="Zhou S."/>
            <person name="Teague B."/>
            <person name="Potamousis K."/>
            <person name="Churas C."/>
            <person name="Place M."/>
            <person name="Herschleb J."/>
            <person name="Runnheim R."/>
            <person name="Forrest D."/>
            <person name="Amos-Landgraf J."/>
            <person name="Schwartz D.C."/>
            <person name="Cheng Z."/>
            <person name="Lindblad-Toh K."/>
            <person name="Eichler E.E."/>
            <person name="Ponting C.P."/>
        </authorList>
    </citation>
    <scope>NUCLEOTIDE SEQUENCE [LARGE SCALE GENOMIC DNA]</scope>
    <source>
        <strain>C57BL/6J</strain>
    </source>
</reference>
<reference key="2">
    <citation type="journal article" date="2004" name="Genome Res.">
        <title>The status, quality, and expansion of the NIH full-length cDNA project: the Mammalian Gene Collection (MGC).</title>
        <authorList>
            <consortium name="The MGC Project Team"/>
        </authorList>
    </citation>
    <scope>NUCLEOTIDE SEQUENCE [LARGE SCALE MRNA] (ISOFORM 1)</scope>
    <scope>NUCLEOTIDE SEQUENCE [LARGE SCALE MRNA] OF 348-1481 (ISOFORM 2)</scope>
    <source>
        <strain>C57BL/6J</strain>
        <tissue>Brain</tissue>
        <tissue>Eye</tissue>
    </source>
</reference>
<reference key="3">
    <citation type="journal article" date="2009" name="Immunity">
        <title>The phagosomal proteome in interferon-gamma-activated macrophages.</title>
        <authorList>
            <person name="Trost M."/>
            <person name="English L."/>
            <person name="Lemieux S."/>
            <person name="Courcelles M."/>
            <person name="Desjardins M."/>
            <person name="Thibault P."/>
        </authorList>
    </citation>
    <scope>PHOSPHORYLATION [LARGE SCALE ANALYSIS] AT SER-441</scope>
    <scope>IDENTIFICATION BY MASS SPECTROMETRY [LARGE SCALE ANALYSIS]</scope>
</reference>
<reference key="4">
    <citation type="journal article" date="2010" name="Cell">
        <title>A tissue-specific atlas of mouse protein phosphorylation and expression.</title>
        <authorList>
            <person name="Huttlin E.L."/>
            <person name="Jedrychowski M.P."/>
            <person name="Elias J.E."/>
            <person name="Goswami T."/>
            <person name="Rad R."/>
            <person name="Beausoleil S.A."/>
            <person name="Villen J."/>
            <person name="Haas W."/>
            <person name="Sowa M.E."/>
            <person name="Gygi S.P."/>
        </authorList>
    </citation>
    <scope>PHOSPHORYLATION [LARGE SCALE ANALYSIS] AT SER-649; SER-1353 AND SER-1384</scope>
    <scope>IDENTIFICATION BY MASS SPECTROMETRY [LARGE SCALE ANALYSIS]</scope>
    <source>
        <tissue>Lung</tissue>
        <tissue>Spleen</tissue>
    </source>
</reference>
<reference key="5">
    <citation type="journal article" date="2011" name="Mol. Biol. Cell">
        <title>Protective role of Gipie, a Girdin family protein, in endoplasmic reticulum stress responses in endothelial cells.</title>
        <authorList>
            <person name="Matsushita E."/>
            <person name="Asai N."/>
            <person name="Enomoto A."/>
            <person name="Kawamoto Y."/>
            <person name="Kato T."/>
            <person name="Mii S."/>
            <person name="Maeda K."/>
            <person name="Shibata R."/>
            <person name="Hattori S."/>
            <person name="Hagikura M."/>
            <person name="Takahashi K."/>
            <person name="Sokabe M."/>
            <person name="Murakumo Y."/>
            <person name="Murohara T."/>
            <person name="Takahashi M."/>
        </authorList>
    </citation>
    <scope>FUNCTION</scope>
    <scope>INTERACTION WITH HSPA5</scope>
    <scope>TISSUE SPECIFICITY</scope>
</reference>
<reference key="6">
    <citation type="journal article" date="2014" name="J. Exp. Med.">
        <title>CCDC88B is a novel regulator of maturation and effector functions of T cells during pathological inflammation.</title>
        <authorList>
            <person name="Kennedy J.M."/>
            <person name="Fodil N."/>
            <person name="Torre S."/>
            <person name="Bongfen S.E."/>
            <person name="Olivier J.F."/>
            <person name="Leung V."/>
            <person name="Langlais D."/>
            <person name="Meunier C."/>
            <person name="Berghout J."/>
            <person name="Langat P."/>
            <person name="Schwartzentruber J."/>
            <person name="Majewski J."/>
            <person name="Lathrop M."/>
            <person name="Vidal S.M."/>
            <person name="Gros P."/>
        </authorList>
    </citation>
    <scope>FUNCTION</scope>
    <scope>DISRUPTION PHENOTYPE</scope>
    <scope>SUBCELLULAR LOCATION</scope>
    <scope>TISSUE SPECIFICITY</scope>
</reference>
<protein>
    <recommendedName>
        <fullName>Coiled-coil domain-containing protein 88B</fullName>
    </recommendedName>
    <alternativeName>
        <fullName evidence="7">Gipie</fullName>
    </alternativeName>
    <alternativeName>
        <fullName>Hook-related protein 3</fullName>
        <shortName>HkRP3</shortName>
    </alternativeName>
</protein>